<feature type="chain" id="PRO_1000009915" description="Uracil-DNA glycosylase">
    <location>
        <begin position="1"/>
        <end position="227"/>
    </location>
</feature>
<feature type="active site" description="Proton acceptor" evidence="1">
    <location>
        <position position="68"/>
    </location>
</feature>
<name>UNG_MYCSK</name>
<keyword id="KW-0963">Cytoplasm</keyword>
<keyword id="KW-0227">DNA damage</keyword>
<keyword id="KW-0234">DNA repair</keyword>
<keyword id="KW-0378">Hydrolase</keyword>
<organism>
    <name type="scientific">Mycobacterium sp. (strain KMS)</name>
    <dbReference type="NCBI Taxonomy" id="189918"/>
    <lineage>
        <taxon>Bacteria</taxon>
        <taxon>Bacillati</taxon>
        <taxon>Actinomycetota</taxon>
        <taxon>Actinomycetes</taxon>
        <taxon>Mycobacteriales</taxon>
        <taxon>Mycobacteriaceae</taxon>
        <taxon>Mycobacterium</taxon>
    </lineage>
</organism>
<sequence>MTARALSELVDQGWAQALEPVREQVAQMGEFLRAELAAGHRYLPAGANVLRAFSFPFDQVRVLIVGQDPYPTPGHAVGLSFSVDPEVRPLPRSLANIFTEYTADLGYPQPSNGDLSPWAQRGVLLLNRVLTVRPGTPASHRGKGWEAVTECAIRALVARDTPMVAVLWGRDAATLKPMLTGSACVAIESPHPSPLSASRGFFGSRPFSRANELLTQMGAEPIDWRLP</sequence>
<protein>
    <recommendedName>
        <fullName evidence="1">Uracil-DNA glycosylase</fullName>
        <shortName evidence="1">UDG</shortName>
        <ecNumber evidence="1">3.2.2.27</ecNumber>
    </recommendedName>
</protein>
<accession>A1UEC0</accession>
<proteinExistence type="inferred from homology"/>
<comment type="function">
    <text evidence="1">Excises uracil residues from the DNA which can arise as a result of misincorporation of dUMP residues by DNA polymerase or due to deamination of cytosine.</text>
</comment>
<comment type="catalytic activity">
    <reaction evidence="1">
        <text>Hydrolyzes single-stranded DNA or mismatched double-stranded DNA and polynucleotides, releasing free uracil.</text>
        <dbReference type="EC" id="3.2.2.27"/>
    </reaction>
</comment>
<comment type="subcellular location">
    <subcellularLocation>
        <location evidence="1">Cytoplasm</location>
    </subcellularLocation>
</comment>
<comment type="similarity">
    <text evidence="1">Belongs to the uracil-DNA glycosylase (UDG) superfamily. UNG family.</text>
</comment>
<dbReference type="EC" id="3.2.2.27" evidence="1"/>
<dbReference type="EMBL" id="CP000518">
    <property type="protein sequence ID" value="ABL91178.1"/>
    <property type="molecule type" value="Genomic_DNA"/>
</dbReference>
<dbReference type="SMR" id="A1UEC0"/>
<dbReference type="STRING" id="189918.Mkms_1979"/>
<dbReference type="KEGG" id="mkm:Mkms_1979"/>
<dbReference type="HOGENOM" id="CLU_032162_3_1_11"/>
<dbReference type="OrthoDB" id="9804372at2"/>
<dbReference type="GO" id="GO:0005737">
    <property type="term" value="C:cytoplasm"/>
    <property type="evidence" value="ECO:0007669"/>
    <property type="project" value="UniProtKB-SubCell"/>
</dbReference>
<dbReference type="GO" id="GO:0004844">
    <property type="term" value="F:uracil DNA N-glycosylase activity"/>
    <property type="evidence" value="ECO:0007669"/>
    <property type="project" value="UniProtKB-UniRule"/>
</dbReference>
<dbReference type="GO" id="GO:0097510">
    <property type="term" value="P:base-excision repair, AP site formation via deaminated base removal"/>
    <property type="evidence" value="ECO:0007669"/>
    <property type="project" value="TreeGrafter"/>
</dbReference>
<dbReference type="CDD" id="cd10027">
    <property type="entry name" value="UDG-F1-like"/>
    <property type="match status" value="1"/>
</dbReference>
<dbReference type="FunFam" id="3.40.470.10:FF:000006">
    <property type="entry name" value="Uracil-DNA glycosylase"/>
    <property type="match status" value="1"/>
</dbReference>
<dbReference type="Gene3D" id="3.40.470.10">
    <property type="entry name" value="Uracil-DNA glycosylase-like domain"/>
    <property type="match status" value="1"/>
</dbReference>
<dbReference type="HAMAP" id="MF_00148">
    <property type="entry name" value="UDG"/>
    <property type="match status" value="1"/>
</dbReference>
<dbReference type="InterPro" id="IPR002043">
    <property type="entry name" value="UDG_fam1"/>
</dbReference>
<dbReference type="InterPro" id="IPR018085">
    <property type="entry name" value="Ura-DNA_Glyclase_AS"/>
</dbReference>
<dbReference type="InterPro" id="IPR005122">
    <property type="entry name" value="Uracil-DNA_glycosylase-like"/>
</dbReference>
<dbReference type="InterPro" id="IPR036895">
    <property type="entry name" value="Uracil-DNA_glycosylase-like_sf"/>
</dbReference>
<dbReference type="NCBIfam" id="NF003588">
    <property type="entry name" value="PRK05254.1-1"/>
    <property type="match status" value="1"/>
</dbReference>
<dbReference type="NCBIfam" id="NF003592">
    <property type="entry name" value="PRK05254.1-5"/>
    <property type="match status" value="1"/>
</dbReference>
<dbReference type="NCBIfam" id="TIGR00628">
    <property type="entry name" value="ung"/>
    <property type="match status" value="1"/>
</dbReference>
<dbReference type="PANTHER" id="PTHR11264">
    <property type="entry name" value="URACIL-DNA GLYCOSYLASE"/>
    <property type="match status" value="1"/>
</dbReference>
<dbReference type="PANTHER" id="PTHR11264:SF0">
    <property type="entry name" value="URACIL-DNA GLYCOSYLASE"/>
    <property type="match status" value="1"/>
</dbReference>
<dbReference type="Pfam" id="PF03167">
    <property type="entry name" value="UDG"/>
    <property type="match status" value="1"/>
</dbReference>
<dbReference type="SMART" id="SM00986">
    <property type="entry name" value="UDG"/>
    <property type="match status" value="1"/>
</dbReference>
<dbReference type="SMART" id="SM00987">
    <property type="entry name" value="UreE_C"/>
    <property type="match status" value="1"/>
</dbReference>
<dbReference type="SUPFAM" id="SSF52141">
    <property type="entry name" value="Uracil-DNA glycosylase-like"/>
    <property type="match status" value="1"/>
</dbReference>
<dbReference type="PROSITE" id="PS00130">
    <property type="entry name" value="U_DNA_GLYCOSYLASE"/>
    <property type="match status" value="1"/>
</dbReference>
<evidence type="ECO:0000255" key="1">
    <source>
        <dbReference type="HAMAP-Rule" id="MF_00148"/>
    </source>
</evidence>
<reference key="1">
    <citation type="submission" date="2006-12" db="EMBL/GenBank/DDBJ databases">
        <title>Complete sequence of chromosome of Mycobacterium sp. KMS.</title>
        <authorList>
            <consortium name="US DOE Joint Genome Institute"/>
            <person name="Copeland A."/>
            <person name="Lucas S."/>
            <person name="Lapidus A."/>
            <person name="Barry K."/>
            <person name="Detter J.C."/>
            <person name="Glavina del Rio T."/>
            <person name="Hammon N."/>
            <person name="Israni S."/>
            <person name="Dalin E."/>
            <person name="Tice H."/>
            <person name="Pitluck S."/>
            <person name="Kiss H."/>
            <person name="Brettin T."/>
            <person name="Bruce D."/>
            <person name="Han C."/>
            <person name="Tapia R."/>
            <person name="Gilna P."/>
            <person name="Schmutz J."/>
            <person name="Larimer F."/>
            <person name="Land M."/>
            <person name="Hauser L."/>
            <person name="Kyrpides N."/>
            <person name="Mikhailova N."/>
            <person name="Miller C.D."/>
            <person name="Richardson P."/>
        </authorList>
    </citation>
    <scope>NUCLEOTIDE SEQUENCE [LARGE SCALE GENOMIC DNA]</scope>
    <source>
        <strain>KMS</strain>
    </source>
</reference>
<gene>
    <name evidence="1" type="primary">ung</name>
    <name type="ordered locus">Mkms_1979</name>
</gene>